<reference key="1">
    <citation type="submission" date="2008-10" db="EMBL/GenBank/DDBJ databases">
        <title>Genome sequence of Clostridium botulinum A2 Kyoto.</title>
        <authorList>
            <person name="Shrivastava S."/>
            <person name="Brinkac L.M."/>
            <person name="Brown J.L."/>
            <person name="Bruce D."/>
            <person name="Detter C.C."/>
            <person name="Johnson E.A."/>
            <person name="Munk C.A."/>
            <person name="Smith L.A."/>
            <person name="Smith T.J."/>
            <person name="Sutton G."/>
            <person name="Brettin T.S."/>
        </authorList>
    </citation>
    <scope>NUCLEOTIDE SEQUENCE [LARGE SCALE GENOMIC DNA]</scope>
    <source>
        <strain>Kyoto / Type A2</strain>
    </source>
</reference>
<accession>C1FKM7</accession>
<organism>
    <name type="scientific">Clostridium botulinum (strain Kyoto / Type A2)</name>
    <dbReference type="NCBI Taxonomy" id="536232"/>
    <lineage>
        <taxon>Bacteria</taxon>
        <taxon>Bacillati</taxon>
        <taxon>Bacillota</taxon>
        <taxon>Clostridia</taxon>
        <taxon>Eubacteriales</taxon>
        <taxon>Clostridiaceae</taxon>
        <taxon>Clostridium</taxon>
    </lineage>
</organism>
<keyword id="KW-0687">Ribonucleoprotein</keyword>
<keyword id="KW-0689">Ribosomal protein</keyword>
<keyword id="KW-0694">RNA-binding</keyword>
<keyword id="KW-0699">rRNA-binding</keyword>
<protein>
    <recommendedName>
        <fullName evidence="1">Large ribosomal subunit protein bL20</fullName>
    </recommendedName>
    <alternativeName>
        <fullName evidence="2">50S ribosomal protein L20</fullName>
    </alternativeName>
</protein>
<name>RL20_CLOBJ</name>
<feature type="chain" id="PRO_1000193949" description="Large ribosomal subunit protein bL20">
    <location>
        <begin position="1"/>
        <end position="119"/>
    </location>
</feature>
<sequence>MARVKRAMNARKRHKKVLKLAKGYYGGKSKLFKTANESVIRALRNAYVGRKLKKRDYRKLWIARINAATRMNGLSYSKFMNGIKNAGIDINRKMLSEIAINDPKAFAELVDVAKKQLNA</sequence>
<comment type="function">
    <text evidence="1">Binds directly to 23S ribosomal RNA and is necessary for the in vitro assembly process of the 50S ribosomal subunit. It is not involved in the protein synthesizing functions of that subunit.</text>
</comment>
<comment type="similarity">
    <text evidence="1">Belongs to the bacterial ribosomal protein bL20 family.</text>
</comment>
<gene>
    <name evidence="1" type="primary">rplT</name>
    <name type="ordered locus">CLM_3542</name>
</gene>
<evidence type="ECO:0000255" key="1">
    <source>
        <dbReference type="HAMAP-Rule" id="MF_00382"/>
    </source>
</evidence>
<evidence type="ECO:0000305" key="2"/>
<dbReference type="EMBL" id="CP001581">
    <property type="protein sequence ID" value="ACO83921.1"/>
    <property type="molecule type" value="Genomic_DNA"/>
</dbReference>
<dbReference type="RefSeq" id="WP_003386545.1">
    <property type="nucleotide sequence ID" value="NC_012563.1"/>
</dbReference>
<dbReference type="SMR" id="C1FKM7"/>
<dbReference type="GeneID" id="92939856"/>
<dbReference type="KEGG" id="cby:CLM_3542"/>
<dbReference type="eggNOG" id="COG0292">
    <property type="taxonomic scope" value="Bacteria"/>
</dbReference>
<dbReference type="HOGENOM" id="CLU_123265_0_1_9"/>
<dbReference type="Proteomes" id="UP000001374">
    <property type="component" value="Chromosome"/>
</dbReference>
<dbReference type="GO" id="GO:1990904">
    <property type="term" value="C:ribonucleoprotein complex"/>
    <property type="evidence" value="ECO:0007669"/>
    <property type="project" value="UniProtKB-KW"/>
</dbReference>
<dbReference type="GO" id="GO:0005840">
    <property type="term" value="C:ribosome"/>
    <property type="evidence" value="ECO:0007669"/>
    <property type="project" value="UniProtKB-KW"/>
</dbReference>
<dbReference type="GO" id="GO:0019843">
    <property type="term" value="F:rRNA binding"/>
    <property type="evidence" value="ECO:0007669"/>
    <property type="project" value="UniProtKB-UniRule"/>
</dbReference>
<dbReference type="GO" id="GO:0003735">
    <property type="term" value="F:structural constituent of ribosome"/>
    <property type="evidence" value="ECO:0007669"/>
    <property type="project" value="InterPro"/>
</dbReference>
<dbReference type="GO" id="GO:0000027">
    <property type="term" value="P:ribosomal large subunit assembly"/>
    <property type="evidence" value="ECO:0007669"/>
    <property type="project" value="UniProtKB-UniRule"/>
</dbReference>
<dbReference type="GO" id="GO:0006412">
    <property type="term" value="P:translation"/>
    <property type="evidence" value="ECO:0007669"/>
    <property type="project" value="InterPro"/>
</dbReference>
<dbReference type="CDD" id="cd07026">
    <property type="entry name" value="Ribosomal_L20"/>
    <property type="match status" value="1"/>
</dbReference>
<dbReference type="FunFam" id="1.10.1900.20:FF:000001">
    <property type="entry name" value="50S ribosomal protein L20"/>
    <property type="match status" value="1"/>
</dbReference>
<dbReference type="Gene3D" id="6.10.160.10">
    <property type="match status" value="1"/>
</dbReference>
<dbReference type="Gene3D" id="1.10.1900.20">
    <property type="entry name" value="Ribosomal protein L20"/>
    <property type="match status" value="1"/>
</dbReference>
<dbReference type="HAMAP" id="MF_00382">
    <property type="entry name" value="Ribosomal_bL20"/>
    <property type="match status" value="1"/>
</dbReference>
<dbReference type="InterPro" id="IPR005813">
    <property type="entry name" value="Ribosomal_bL20"/>
</dbReference>
<dbReference type="InterPro" id="IPR049946">
    <property type="entry name" value="RIBOSOMAL_L20_CS"/>
</dbReference>
<dbReference type="InterPro" id="IPR035566">
    <property type="entry name" value="Ribosomal_protein_bL20_C"/>
</dbReference>
<dbReference type="NCBIfam" id="TIGR01032">
    <property type="entry name" value="rplT_bact"/>
    <property type="match status" value="1"/>
</dbReference>
<dbReference type="PANTHER" id="PTHR10986">
    <property type="entry name" value="39S RIBOSOMAL PROTEIN L20"/>
    <property type="match status" value="1"/>
</dbReference>
<dbReference type="Pfam" id="PF00453">
    <property type="entry name" value="Ribosomal_L20"/>
    <property type="match status" value="1"/>
</dbReference>
<dbReference type="PRINTS" id="PR00062">
    <property type="entry name" value="RIBOSOMALL20"/>
</dbReference>
<dbReference type="SUPFAM" id="SSF74731">
    <property type="entry name" value="Ribosomal protein L20"/>
    <property type="match status" value="1"/>
</dbReference>
<dbReference type="PROSITE" id="PS00937">
    <property type="entry name" value="RIBOSOMAL_L20"/>
    <property type="match status" value="1"/>
</dbReference>
<proteinExistence type="inferred from homology"/>